<evidence type="ECO:0000255" key="1">
    <source>
        <dbReference type="HAMAP-Rule" id="MF_00188"/>
    </source>
</evidence>
<comment type="cofactor">
    <cofactor evidence="1">
        <name>Zn(2+)</name>
        <dbReference type="ChEBI" id="CHEBI:29105"/>
    </cofactor>
    <text evidence="1">Binds 1 zinc ion per subunit.</text>
</comment>
<comment type="subcellular location">
    <subcellularLocation>
        <location evidence="1">Cell membrane</location>
        <topology evidence="1">Multi-pass membrane protein</topology>
    </subcellularLocation>
</comment>
<comment type="similarity">
    <text evidence="1">Belongs to the peptidase M48B family.</text>
</comment>
<feature type="chain" id="PRO_0000138935" description="Protease HtpX homolog">
    <location>
        <begin position="1"/>
        <end position="308"/>
    </location>
</feature>
<feature type="transmembrane region" description="Helical" evidence="1">
    <location>
        <begin position="16"/>
        <end position="36"/>
    </location>
</feature>
<feature type="transmembrane region" description="Helical" evidence="1">
    <location>
        <begin position="39"/>
        <end position="59"/>
    </location>
</feature>
<feature type="transmembrane region" description="Helical" evidence="1">
    <location>
        <begin position="161"/>
        <end position="181"/>
    </location>
</feature>
<feature type="transmembrane region" description="Helical" evidence="1">
    <location>
        <begin position="192"/>
        <end position="212"/>
    </location>
</feature>
<feature type="active site" evidence="1">
    <location>
        <position position="150"/>
    </location>
</feature>
<feature type="binding site" evidence="1">
    <location>
        <position position="149"/>
    </location>
    <ligand>
        <name>Zn(2+)</name>
        <dbReference type="ChEBI" id="CHEBI:29105"/>
        <note>catalytic</note>
    </ligand>
</feature>
<feature type="binding site" evidence="1">
    <location>
        <position position="153"/>
    </location>
    <ligand>
        <name>Zn(2+)</name>
        <dbReference type="ChEBI" id="CHEBI:29105"/>
        <note>catalytic</note>
    </ligand>
</feature>
<feature type="binding site" evidence="1">
    <location>
        <position position="217"/>
    </location>
    <ligand>
        <name>Zn(2+)</name>
        <dbReference type="ChEBI" id="CHEBI:29105"/>
        <note>catalytic</note>
    </ligand>
</feature>
<name>HTPX_THEVO</name>
<gene>
    <name evidence="1" type="primary">htpX</name>
    <name type="ordered locus">TV1040</name>
    <name type="ORF">TVG1065076</name>
</gene>
<organism>
    <name type="scientific">Thermoplasma volcanium (strain ATCC 51530 / DSM 4299 / JCM 9571 / NBRC 15438 / GSS1)</name>
    <dbReference type="NCBI Taxonomy" id="273116"/>
    <lineage>
        <taxon>Archaea</taxon>
        <taxon>Methanobacteriati</taxon>
        <taxon>Thermoplasmatota</taxon>
        <taxon>Thermoplasmata</taxon>
        <taxon>Thermoplasmatales</taxon>
        <taxon>Thermoplasmataceae</taxon>
        <taxon>Thermoplasma</taxon>
    </lineage>
</organism>
<protein>
    <recommendedName>
        <fullName evidence="1">Protease HtpX homolog</fullName>
        <ecNumber evidence="1">3.4.24.-</ecNumber>
    </recommendedName>
</protein>
<keyword id="KW-1003">Cell membrane</keyword>
<keyword id="KW-0378">Hydrolase</keyword>
<keyword id="KW-0472">Membrane</keyword>
<keyword id="KW-0479">Metal-binding</keyword>
<keyword id="KW-0482">Metalloprotease</keyword>
<keyword id="KW-0645">Protease</keyword>
<keyword id="KW-0812">Transmembrane</keyword>
<keyword id="KW-1133">Transmembrane helix</keyword>
<keyword id="KW-0862">Zinc</keyword>
<dbReference type="EC" id="3.4.24.-" evidence="1"/>
<dbReference type="EMBL" id="BA000011">
    <property type="protein sequence ID" value="BAB60182.1"/>
    <property type="molecule type" value="Genomic_DNA"/>
</dbReference>
<dbReference type="STRING" id="273116.gene:9381834"/>
<dbReference type="PaxDb" id="273116-14325278"/>
<dbReference type="KEGG" id="tvo:TVG1065076"/>
<dbReference type="eggNOG" id="arCOG01331">
    <property type="taxonomic scope" value="Archaea"/>
</dbReference>
<dbReference type="HOGENOM" id="CLU_042266_4_1_2"/>
<dbReference type="PhylomeDB" id="Q979X0"/>
<dbReference type="Proteomes" id="UP000001017">
    <property type="component" value="Chromosome"/>
</dbReference>
<dbReference type="GO" id="GO:0005886">
    <property type="term" value="C:plasma membrane"/>
    <property type="evidence" value="ECO:0007669"/>
    <property type="project" value="UniProtKB-SubCell"/>
</dbReference>
<dbReference type="GO" id="GO:0004222">
    <property type="term" value="F:metalloendopeptidase activity"/>
    <property type="evidence" value="ECO:0007669"/>
    <property type="project" value="UniProtKB-UniRule"/>
</dbReference>
<dbReference type="GO" id="GO:0008270">
    <property type="term" value="F:zinc ion binding"/>
    <property type="evidence" value="ECO:0007669"/>
    <property type="project" value="UniProtKB-UniRule"/>
</dbReference>
<dbReference type="GO" id="GO:0006508">
    <property type="term" value="P:proteolysis"/>
    <property type="evidence" value="ECO:0007669"/>
    <property type="project" value="UniProtKB-KW"/>
</dbReference>
<dbReference type="CDD" id="cd07338">
    <property type="entry name" value="M48B_HtpX_like"/>
    <property type="match status" value="1"/>
</dbReference>
<dbReference type="Gene3D" id="3.30.2010.10">
    <property type="entry name" value="Metalloproteases ('zincins'), catalytic domain"/>
    <property type="match status" value="1"/>
</dbReference>
<dbReference type="HAMAP" id="MF_00188">
    <property type="entry name" value="Pept_M48_protease_HtpX"/>
    <property type="match status" value="1"/>
</dbReference>
<dbReference type="InterPro" id="IPR050083">
    <property type="entry name" value="HtpX_protease"/>
</dbReference>
<dbReference type="InterPro" id="IPR022919">
    <property type="entry name" value="Pept_M48_protease_HtpX"/>
</dbReference>
<dbReference type="InterPro" id="IPR001915">
    <property type="entry name" value="Peptidase_M48"/>
</dbReference>
<dbReference type="NCBIfam" id="NF002322">
    <property type="entry name" value="PRK01265.1"/>
    <property type="match status" value="1"/>
</dbReference>
<dbReference type="PANTHER" id="PTHR43221">
    <property type="entry name" value="PROTEASE HTPX"/>
    <property type="match status" value="1"/>
</dbReference>
<dbReference type="PANTHER" id="PTHR43221:SF2">
    <property type="entry name" value="PROTEASE HTPX HOMOLOG"/>
    <property type="match status" value="1"/>
</dbReference>
<dbReference type="Pfam" id="PF01435">
    <property type="entry name" value="Peptidase_M48"/>
    <property type="match status" value="1"/>
</dbReference>
<accession>Q979X0</accession>
<sequence length="308" mass="34167">MVPMASNNLAYIKLRLLSLLVGLGIAALASLIIYAVAYYLFGIYSIGIIFGVFVLVLMMDLLQWFIGPYIVDMVYRAKKADPNRYGNIIAIVEEVAKLNGIRPPTLYISEVSFPNAFAYESPIAGRRIAITRPLLGILNEDELRAVIGHEIGHLKHHDSAVIMAIGLIPTLIFYFAYTTLFAGDRRNGGSAIILALVLMVVSFLFNIMVLSVNRLRESYADANAALTIPNGARNLQTALAKIVRYGSSAKNTAASMLLFANYDMDREDVETLIDKWRTMRVGILSDLFSDHPHPAKRIRLLDKLQDSS</sequence>
<reference key="1">
    <citation type="journal article" date="2000" name="Proc. Natl. Acad. Sci. U.S.A.">
        <title>Archaeal adaptation to higher temperatures revealed by genomic sequence of Thermoplasma volcanium.</title>
        <authorList>
            <person name="Kawashima T."/>
            <person name="Amano N."/>
            <person name="Koike H."/>
            <person name="Makino S."/>
            <person name="Higuchi S."/>
            <person name="Kawashima-Ohya Y."/>
            <person name="Watanabe K."/>
            <person name="Yamazaki M."/>
            <person name="Kanehori K."/>
            <person name="Kawamoto T."/>
            <person name="Nunoshiba T."/>
            <person name="Yamamoto Y."/>
            <person name="Aramaki H."/>
            <person name="Makino K."/>
            <person name="Suzuki M."/>
        </authorList>
    </citation>
    <scope>NUCLEOTIDE SEQUENCE [LARGE SCALE GENOMIC DNA]</scope>
    <source>
        <strain>ATCC 51530 / DSM 4299 / JCM 9571 / NBRC 15438 / GSS1</strain>
    </source>
</reference>
<proteinExistence type="inferred from homology"/>